<sequence>MNQIVLNIIIAFLWVLFQDEDHFKFSTFFSGYLIGLIVIYILHRFFSDDFYVRKIWVAIKFLGVYLYQLITSSISTINYILFKTKDMNPGLLSYETRLTSDWAITFLTILIIITPGSTVIRISQDSKKFFIHSIDVSEKEKDSLLRSIKHYEDLILEVSR</sequence>
<organism>
    <name type="scientific">Staphylococcus aureus (strain Mu50 / ATCC 700699)</name>
    <dbReference type="NCBI Taxonomy" id="158878"/>
    <lineage>
        <taxon>Bacteria</taxon>
        <taxon>Bacillati</taxon>
        <taxon>Bacillota</taxon>
        <taxon>Bacilli</taxon>
        <taxon>Bacillales</taxon>
        <taxon>Staphylococcaceae</taxon>
        <taxon>Staphylococcus</taxon>
    </lineage>
</organism>
<feature type="chain" id="PRO_0000372217" description="Putative antiporter subunit mnhE2">
    <location>
        <begin position="1"/>
        <end position="160"/>
    </location>
</feature>
<feature type="transmembrane region" description="Helical" evidence="2">
    <location>
        <begin position="22"/>
        <end position="42"/>
    </location>
</feature>
<feature type="transmembrane region" description="Helical" evidence="2">
    <location>
        <begin position="55"/>
        <end position="75"/>
    </location>
</feature>
<feature type="transmembrane region" description="Helical" evidence="2">
    <location>
        <begin position="100"/>
        <end position="120"/>
    </location>
</feature>
<comment type="subunit">
    <text evidence="1">May form a heterooligomeric complex that consists of seven subunits: mnhA2, mnhB2, mnhC2, mnhD2, mnhE2, mnhF2 and mnhG2.</text>
</comment>
<comment type="subcellular location">
    <subcellularLocation>
        <location evidence="3">Cell membrane</location>
        <topology evidence="3">Multi-pass membrane protein</topology>
    </subcellularLocation>
</comment>
<comment type="similarity">
    <text evidence="3">Belongs to the CPA3 antiporters (TC 2.A.63) subunit E family.</text>
</comment>
<dbReference type="EMBL" id="BA000017">
    <property type="protein sequence ID" value="BAB56788.1"/>
    <property type="molecule type" value="Genomic_DNA"/>
</dbReference>
<dbReference type="RefSeq" id="WP_001071971.1">
    <property type="nucleotide sequence ID" value="NC_002758.2"/>
</dbReference>
<dbReference type="SMR" id="Q99VY8"/>
<dbReference type="KEGG" id="sav:SAV0626"/>
<dbReference type="HOGENOM" id="CLU_086615_3_2_9"/>
<dbReference type="PhylomeDB" id="Q99VY8"/>
<dbReference type="Proteomes" id="UP000002481">
    <property type="component" value="Chromosome"/>
</dbReference>
<dbReference type="GO" id="GO:0005886">
    <property type="term" value="C:plasma membrane"/>
    <property type="evidence" value="ECO:0007669"/>
    <property type="project" value="UniProtKB-SubCell"/>
</dbReference>
<dbReference type="GO" id="GO:0015297">
    <property type="term" value="F:antiporter activity"/>
    <property type="evidence" value="ECO:0007669"/>
    <property type="project" value="UniProtKB-KW"/>
</dbReference>
<dbReference type="GO" id="GO:0008324">
    <property type="term" value="F:monoatomic cation transmembrane transporter activity"/>
    <property type="evidence" value="ECO:0007669"/>
    <property type="project" value="InterPro"/>
</dbReference>
<dbReference type="InterPro" id="IPR002758">
    <property type="entry name" value="Cation_antiport_E"/>
</dbReference>
<dbReference type="NCBIfam" id="NF006517">
    <property type="entry name" value="PRK08965.1-1"/>
    <property type="match status" value="1"/>
</dbReference>
<dbReference type="PANTHER" id="PTHR34584">
    <property type="entry name" value="NA(+)/H(+) ANTIPORTER SUBUNIT E1"/>
    <property type="match status" value="1"/>
</dbReference>
<dbReference type="PANTHER" id="PTHR34584:SF1">
    <property type="entry name" value="NA(+)_H(+) ANTIPORTER SUBUNIT E1"/>
    <property type="match status" value="1"/>
</dbReference>
<dbReference type="Pfam" id="PF01899">
    <property type="entry name" value="MNHE"/>
    <property type="match status" value="1"/>
</dbReference>
<dbReference type="PIRSF" id="PIRSF019239">
    <property type="entry name" value="MrpE"/>
    <property type="match status" value="1"/>
</dbReference>
<accession>Q99VY8</accession>
<gene>
    <name type="primary">mnhE2</name>
    <name type="synonym">mrpE2</name>
    <name type="ordered locus">SAV0626</name>
</gene>
<keyword id="KW-0050">Antiport</keyword>
<keyword id="KW-1003">Cell membrane</keyword>
<keyword id="KW-0406">Ion transport</keyword>
<keyword id="KW-0472">Membrane</keyword>
<keyword id="KW-0812">Transmembrane</keyword>
<keyword id="KW-1133">Transmembrane helix</keyword>
<keyword id="KW-0813">Transport</keyword>
<name>MNHE2_STAAM</name>
<protein>
    <recommendedName>
        <fullName>Putative antiporter subunit mnhE2</fullName>
    </recommendedName>
    <alternativeName>
        <fullName>Mrp complex subunit E2</fullName>
    </alternativeName>
    <alternativeName>
        <fullName>Putative NADH-ubiquinone oxidoreductase subunit mnhE2</fullName>
    </alternativeName>
</protein>
<evidence type="ECO:0000250" key="1"/>
<evidence type="ECO:0000255" key="2"/>
<evidence type="ECO:0000305" key="3"/>
<reference key="1">
    <citation type="journal article" date="2001" name="Lancet">
        <title>Whole genome sequencing of meticillin-resistant Staphylococcus aureus.</title>
        <authorList>
            <person name="Kuroda M."/>
            <person name="Ohta T."/>
            <person name="Uchiyama I."/>
            <person name="Baba T."/>
            <person name="Yuzawa H."/>
            <person name="Kobayashi I."/>
            <person name="Cui L."/>
            <person name="Oguchi A."/>
            <person name="Aoki K."/>
            <person name="Nagai Y."/>
            <person name="Lian J.-Q."/>
            <person name="Ito T."/>
            <person name="Kanamori M."/>
            <person name="Matsumaru H."/>
            <person name="Maruyama A."/>
            <person name="Murakami H."/>
            <person name="Hosoyama A."/>
            <person name="Mizutani-Ui Y."/>
            <person name="Takahashi N.K."/>
            <person name="Sawano T."/>
            <person name="Inoue R."/>
            <person name="Kaito C."/>
            <person name="Sekimizu K."/>
            <person name="Hirakawa H."/>
            <person name="Kuhara S."/>
            <person name="Goto S."/>
            <person name="Yabuzaki J."/>
            <person name="Kanehisa M."/>
            <person name="Yamashita A."/>
            <person name="Oshima K."/>
            <person name="Furuya K."/>
            <person name="Yoshino C."/>
            <person name="Shiba T."/>
            <person name="Hattori M."/>
            <person name="Ogasawara N."/>
            <person name="Hayashi H."/>
            <person name="Hiramatsu K."/>
        </authorList>
    </citation>
    <scope>NUCLEOTIDE SEQUENCE [LARGE SCALE GENOMIC DNA]</scope>
    <source>
        <strain>Mu50 / ATCC 700699</strain>
    </source>
</reference>
<proteinExistence type="inferred from homology"/>